<evidence type="ECO:0000255" key="1">
    <source>
        <dbReference type="HAMAP-Rule" id="MF_00822"/>
    </source>
</evidence>
<evidence type="ECO:0000256" key="2">
    <source>
        <dbReference type="SAM" id="MobiDB-lite"/>
    </source>
</evidence>
<feature type="chain" id="PRO_1000213113" description="Urease accessory protein UreE">
    <location>
        <begin position="1"/>
        <end position="167"/>
    </location>
</feature>
<feature type="region of interest" description="Disordered" evidence="2">
    <location>
        <begin position="137"/>
        <end position="167"/>
    </location>
</feature>
<feature type="compositionally biased region" description="Basic and acidic residues" evidence="2">
    <location>
        <begin position="149"/>
        <end position="167"/>
    </location>
</feature>
<proteinExistence type="inferred from homology"/>
<gene>
    <name evidence="1" type="primary">ureE</name>
    <name type="ordered locus">Arad_3462</name>
</gene>
<protein>
    <recommendedName>
        <fullName evidence="1">Urease accessory protein UreE</fullName>
    </recommendedName>
</protein>
<reference key="1">
    <citation type="journal article" date="2009" name="J. Bacteriol.">
        <title>Genome sequences of three Agrobacterium biovars help elucidate the evolution of multichromosome genomes in bacteria.</title>
        <authorList>
            <person name="Slater S.C."/>
            <person name="Goldman B.S."/>
            <person name="Goodner B."/>
            <person name="Setubal J.C."/>
            <person name="Farrand S.K."/>
            <person name="Nester E.W."/>
            <person name="Burr T.J."/>
            <person name="Banta L."/>
            <person name="Dickerman A.W."/>
            <person name="Paulsen I."/>
            <person name="Otten L."/>
            <person name="Suen G."/>
            <person name="Welch R."/>
            <person name="Almeida N.F."/>
            <person name="Arnold F."/>
            <person name="Burton O.T."/>
            <person name="Du Z."/>
            <person name="Ewing A."/>
            <person name="Godsy E."/>
            <person name="Heisel S."/>
            <person name="Houmiel K.L."/>
            <person name="Jhaveri J."/>
            <person name="Lu J."/>
            <person name="Miller N.M."/>
            <person name="Norton S."/>
            <person name="Chen Q."/>
            <person name="Phoolcharoen W."/>
            <person name="Ohlin V."/>
            <person name="Ondrusek D."/>
            <person name="Pride N."/>
            <person name="Stricklin S.L."/>
            <person name="Sun J."/>
            <person name="Wheeler C."/>
            <person name="Wilson L."/>
            <person name="Zhu H."/>
            <person name="Wood D.W."/>
        </authorList>
    </citation>
    <scope>NUCLEOTIDE SEQUENCE [LARGE SCALE GENOMIC DNA]</scope>
    <source>
        <strain>K84 / ATCC BAA-868</strain>
    </source>
</reference>
<dbReference type="EMBL" id="CP000628">
    <property type="protein sequence ID" value="ACM27408.1"/>
    <property type="molecule type" value="Genomic_DNA"/>
</dbReference>
<dbReference type="RefSeq" id="WP_012652106.1">
    <property type="nucleotide sequence ID" value="NC_011985.1"/>
</dbReference>
<dbReference type="SMR" id="B9J8M0"/>
<dbReference type="STRING" id="311403.Arad_3462"/>
<dbReference type="GeneID" id="86849290"/>
<dbReference type="KEGG" id="ara:Arad_3462"/>
<dbReference type="eggNOG" id="COG2371">
    <property type="taxonomic scope" value="Bacteria"/>
</dbReference>
<dbReference type="HOGENOM" id="CLU_093757_1_0_5"/>
<dbReference type="Proteomes" id="UP000001600">
    <property type="component" value="Chromosome 1"/>
</dbReference>
<dbReference type="GO" id="GO:0005737">
    <property type="term" value="C:cytoplasm"/>
    <property type="evidence" value="ECO:0007669"/>
    <property type="project" value="UniProtKB-SubCell"/>
</dbReference>
<dbReference type="GO" id="GO:0016151">
    <property type="term" value="F:nickel cation binding"/>
    <property type="evidence" value="ECO:0007669"/>
    <property type="project" value="UniProtKB-UniRule"/>
</dbReference>
<dbReference type="GO" id="GO:0051082">
    <property type="term" value="F:unfolded protein binding"/>
    <property type="evidence" value="ECO:0007669"/>
    <property type="project" value="UniProtKB-UniRule"/>
</dbReference>
<dbReference type="GO" id="GO:0006457">
    <property type="term" value="P:protein folding"/>
    <property type="evidence" value="ECO:0007669"/>
    <property type="project" value="InterPro"/>
</dbReference>
<dbReference type="GO" id="GO:0065003">
    <property type="term" value="P:protein-containing complex assembly"/>
    <property type="evidence" value="ECO:0007669"/>
    <property type="project" value="InterPro"/>
</dbReference>
<dbReference type="GO" id="GO:0019627">
    <property type="term" value="P:urea metabolic process"/>
    <property type="evidence" value="ECO:0007669"/>
    <property type="project" value="InterPro"/>
</dbReference>
<dbReference type="CDD" id="cd00571">
    <property type="entry name" value="UreE"/>
    <property type="match status" value="1"/>
</dbReference>
<dbReference type="Gene3D" id="2.60.260.20">
    <property type="entry name" value="Urease metallochaperone UreE, N-terminal domain"/>
    <property type="match status" value="1"/>
</dbReference>
<dbReference type="Gene3D" id="3.30.70.790">
    <property type="entry name" value="UreE, C-terminal domain"/>
    <property type="match status" value="1"/>
</dbReference>
<dbReference type="HAMAP" id="MF_00822">
    <property type="entry name" value="UreE"/>
    <property type="match status" value="1"/>
</dbReference>
<dbReference type="InterPro" id="IPR012406">
    <property type="entry name" value="UreE"/>
</dbReference>
<dbReference type="InterPro" id="IPR007864">
    <property type="entry name" value="UreE_C_dom"/>
</dbReference>
<dbReference type="InterPro" id="IPR004029">
    <property type="entry name" value="UreE_N"/>
</dbReference>
<dbReference type="InterPro" id="IPR036118">
    <property type="entry name" value="UreE_N_sf"/>
</dbReference>
<dbReference type="NCBIfam" id="NF009760">
    <property type="entry name" value="PRK13261.2-6"/>
    <property type="match status" value="1"/>
</dbReference>
<dbReference type="Pfam" id="PF05194">
    <property type="entry name" value="UreE_C"/>
    <property type="match status" value="1"/>
</dbReference>
<dbReference type="Pfam" id="PF02814">
    <property type="entry name" value="UreE_N"/>
    <property type="match status" value="1"/>
</dbReference>
<dbReference type="PIRSF" id="PIRSF036402">
    <property type="entry name" value="Ureas_acces_UreE"/>
    <property type="match status" value="1"/>
</dbReference>
<dbReference type="SMART" id="SM00988">
    <property type="entry name" value="UreE_N"/>
    <property type="match status" value="1"/>
</dbReference>
<dbReference type="SUPFAM" id="SSF69737">
    <property type="entry name" value="Urease metallochaperone UreE, C-terminal domain"/>
    <property type="match status" value="1"/>
</dbReference>
<dbReference type="SUPFAM" id="SSF69287">
    <property type="entry name" value="Urease metallochaperone UreE, N-terminal domain"/>
    <property type="match status" value="1"/>
</dbReference>
<keyword id="KW-0143">Chaperone</keyword>
<keyword id="KW-0963">Cytoplasm</keyword>
<keyword id="KW-0533">Nickel</keyword>
<organism>
    <name type="scientific">Rhizobium rhizogenes (strain K84 / ATCC BAA-868)</name>
    <name type="common">Agrobacterium radiobacter</name>
    <dbReference type="NCBI Taxonomy" id="311403"/>
    <lineage>
        <taxon>Bacteria</taxon>
        <taxon>Pseudomonadati</taxon>
        <taxon>Pseudomonadota</taxon>
        <taxon>Alphaproteobacteria</taxon>
        <taxon>Hyphomicrobiales</taxon>
        <taxon>Rhizobiaceae</taxon>
        <taxon>Rhizobium/Agrobacterium group</taxon>
        <taxon>Rhizobium</taxon>
    </lineage>
</organism>
<comment type="function">
    <text evidence="1">Involved in urease metallocenter assembly. Binds nickel. Probably functions as a nickel donor during metallocenter assembly.</text>
</comment>
<comment type="subcellular location">
    <subcellularLocation>
        <location evidence="1">Cytoplasm</location>
    </subcellularLocation>
</comment>
<comment type="similarity">
    <text evidence="1">Belongs to the UreE family.</text>
</comment>
<sequence length="167" mass="18966">MQRVTSYLPAGTPSSNPIDRVELPHDLRHLRRKLLHLENGEMVMLDLKEPVLFANGDLLVREDGELIEIVAAPEKLFEIKPRNRLHLIELAWHLGNRHLSAQIEEERILILRDHVIRAMLEGLGATVTEVSEPFQPARGAYHAHGGHSHGHDHGHSHGHDHHDHSHD</sequence>
<accession>B9J8M0</accession>
<name>UREE_RHIR8</name>